<protein>
    <recommendedName>
        <fullName evidence="1">tRNA dimethylallyltransferase 1</fullName>
        <ecNumber evidence="1">2.5.1.75</ecNumber>
    </recommendedName>
    <alternativeName>
        <fullName evidence="1">Dimethylallyl diphosphate:tRNA dimethylallyltransferase 1</fullName>
        <shortName evidence="1">DMAPP:tRNA dimethylallyltransferase 1</shortName>
        <shortName evidence="1">DMATase 1</shortName>
    </alternativeName>
    <alternativeName>
        <fullName evidence="1">Isopentenyl-diphosphate:tRNA isopentenyltransferase 1</fullName>
        <shortName evidence="1">IPP transferase 1</shortName>
        <shortName evidence="1">IPPT 1</shortName>
        <shortName evidence="1">IPTase 1</shortName>
    </alternativeName>
</protein>
<comment type="function">
    <text evidence="1">Catalyzes the transfer of a dimethylallyl group onto the adenine at position 37 in tRNAs that read codons beginning with uridine, leading to the formation of N6-(dimethylallyl)adenosine (i(6)A).</text>
</comment>
<comment type="catalytic activity">
    <reaction evidence="1">
        <text>adenosine(37) in tRNA + dimethylallyl diphosphate = N(6)-dimethylallyladenosine(37) in tRNA + diphosphate</text>
        <dbReference type="Rhea" id="RHEA:26482"/>
        <dbReference type="Rhea" id="RHEA-COMP:10162"/>
        <dbReference type="Rhea" id="RHEA-COMP:10375"/>
        <dbReference type="ChEBI" id="CHEBI:33019"/>
        <dbReference type="ChEBI" id="CHEBI:57623"/>
        <dbReference type="ChEBI" id="CHEBI:74411"/>
        <dbReference type="ChEBI" id="CHEBI:74415"/>
        <dbReference type="EC" id="2.5.1.75"/>
    </reaction>
</comment>
<comment type="cofactor">
    <cofactor evidence="1">
        <name>Mg(2+)</name>
        <dbReference type="ChEBI" id="CHEBI:18420"/>
    </cofactor>
</comment>
<comment type="subunit">
    <text evidence="1">Monomer.</text>
</comment>
<comment type="similarity">
    <text evidence="1">Belongs to the IPP transferase family.</text>
</comment>
<keyword id="KW-0067">ATP-binding</keyword>
<keyword id="KW-0460">Magnesium</keyword>
<keyword id="KW-0547">Nucleotide-binding</keyword>
<keyword id="KW-0808">Transferase</keyword>
<keyword id="KW-0819">tRNA processing</keyword>
<reference key="1">
    <citation type="journal article" date="2007" name="PLoS Biol.">
        <title>Evolution of symbiotic bacteria in the distal human intestine.</title>
        <authorList>
            <person name="Xu J."/>
            <person name="Mahowald M.A."/>
            <person name="Ley R.E."/>
            <person name="Lozupone C.A."/>
            <person name="Hamady M."/>
            <person name="Martens E.C."/>
            <person name="Henrissat B."/>
            <person name="Coutinho P.M."/>
            <person name="Minx P."/>
            <person name="Latreille P."/>
            <person name="Cordum H."/>
            <person name="Van Brunt A."/>
            <person name="Kim K."/>
            <person name="Fulton R.S."/>
            <person name="Fulton L.A."/>
            <person name="Clifton S.W."/>
            <person name="Wilson R.K."/>
            <person name="Knight R.D."/>
            <person name="Gordon J.I."/>
        </authorList>
    </citation>
    <scope>NUCLEOTIDE SEQUENCE [LARGE SCALE GENOMIC DNA]</scope>
    <source>
        <strain>ATCC 8482 / DSM 1447 / JCM 5826 / CCUG 4940 / NBRC 14291 / NCTC 11154</strain>
    </source>
</reference>
<dbReference type="EC" id="2.5.1.75" evidence="1"/>
<dbReference type="EMBL" id="CP000139">
    <property type="protein sequence ID" value="ABR37831.1"/>
    <property type="molecule type" value="Genomic_DNA"/>
</dbReference>
<dbReference type="SMR" id="A6KWL7"/>
<dbReference type="STRING" id="435590.BVU_0101"/>
<dbReference type="PaxDb" id="435590-BVU_0101"/>
<dbReference type="GeneID" id="5301071"/>
<dbReference type="KEGG" id="bvu:BVU_0101"/>
<dbReference type="eggNOG" id="COG0324">
    <property type="taxonomic scope" value="Bacteria"/>
</dbReference>
<dbReference type="HOGENOM" id="CLU_032616_0_1_10"/>
<dbReference type="BioCyc" id="BVUL435590:G1G59-107-MONOMER"/>
<dbReference type="Proteomes" id="UP000002861">
    <property type="component" value="Chromosome"/>
</dbReference>
<dbReference type="GO" id="GO:0005524">
    <property type="term" value="F:ATP binding"/>
    <property type="evidence" value="ECO:0007669"/>
    <property type="project" value="UniProtKB-UniRule"/>
</dbReference>
<dbReference type="GO" id="GO:0052381">
    <property type="term" value="F:tRNA dimethylallyltransferase activity"/>
    <property type="evidence" value="ECO:0007669"/>
    <property type="project" value="UniProtKB-UniRule"/>
</dbReference>
<dbReference type="GO" id="GO:0006400">
    <property type="term" value="P:tRNA modification"/>
    <property type="evidence" value="ECO:0007669"/>
    <property type="project" value="TreeGrafter"/>
</dbReference>
<dbReference type="Gene3D" id="1.10.20.140">
    <property type="match status" value="1"/>
</dbReference>
<dbReference type="Gene3D" id="3.40.50.300">
    <property type="entry name" value="P-loop containing nucleotide triphosphate hydrolases"/>
    <property type="match status" value="1"/>
</dbReference>
<dbReference type="HAMAP" id="MF_00185">
    <property type="entry name" value="IPP_trans"/>
    <property type="match status" value="1"/>
</dbReference>
<dbReference type="InterPro" id="IPR039657">
    <property type="entry name" value="Dimethylallyltransferase"/>
</dbReference>
<dbReference type="InterPro" id="IPR018022">
    <property type="entry name" value="IPT"/>
</dbReference>
<dbReference type="InterPro" id="IPR027417">
    <property type="entry name" value="P-loop_NTPase"/>
</dbReference>
<dbReference type="NCBIfam" id="TIGR00174">
    <property type="entry name" value="miaA"/>
    <property type="match status" value="1"/>
</dbReference>
<dbReference type="PANTHER" id="PTHR11088">
    <property type="entry name" value="TRNA DIMETHYLALLYLTRANSFERASE"/>
    <property type="match status" value="1"/>
</dbReference>
<dbReference type="PANTHER" id="PTHR11088:SF60">
    <property type="entry name" value="TRNA DIMETHYLALLYLTRANSFERASE"/>
    <property type="match status" value="1"/>
</dbReference>
<dbReference type="Pfam" id="PF01715">
    <property type="entry name" value="IPPT"/>
    <property type="match status" value="1"/>
</dbReference>
<dbReference type="SUPFAM" id="SSF52540">
    <property type="entry name" value="P-loop containing nucleoside triphosphate hydrolases"/>
    <property type="match status" value="2"/>
</dbReference>
<organism>
    <name type="scientific">Phocaeicola vulgatus (strain ATCC 8482 / DSM 1447 / JCM 5826 / CCUG 4940 / NBRC 14291 / NCTC 11154)</name>
    <name type="common">Bacteroides vulgatus</name>
    <dbReference type="NCBI Taxonomy" id="435590"/>
    <lineage>
        <taxon>Bacteria</taxon>
        <taxon>Pseudomonadati</taxon>
        <taxon>Bacteroidota</taxon>
        <taxon>Bacteroidia</taxon>
        <taxon>Bacteroidales</taxon>
        <taxon>Bacteroidaceae</taxon>
        <taxon>Phocaeicola</taxon>
    </lineage>
</organism>
<name>MIAA1_PHOV8</name>
<evidence type="ECO:0000255" key="1">
    <source>
        <dbReference type="HAMAP-Rule" id="MF_00185"/>
    </source>
</evidence>
<feature type="chain" id="PRO_0000377081" description="tRNA dimethylallyltransferase 1">
    <location>
        <begin position="1"/>
        <end position="300"/>
    </location>
</feature>
<feature type="region of interest" description="Interaction with substrate tRNA" evidence="1">
    <location>
        <begin position="35"/>
        <end position="38"/>
    </location>
</feature>
<feature type="binding site" evidence="1">
    <location>
        <begin position="10"/>
        <end position="17"/>
    </location>
    <ligand>
        <name>ATP</name>
        <dbReference type="ChEBI" id="CHEBI:30616"/>
    </ligand>
</feature>
<feature type="binding site" evidence="1">
    <location>
        <begin position="12"/>
        <end position="17"/>
    </location>
    <ligand>
        <name>substrate</name>
    </ligand>
</feature>
<feature type="site" description="Interaction with substrate tRNA" evidence="1">
    <location>
        <position position="101"/>
    </location>
</feature>
<feature type="site" description="Interaction with substrate tRNA" evidence="1">
    <location>
        <position position="123"/>
    </location>
</feature>
<gene>
    <name evidence="1" type="primary">miaA1</name>
    <name type="ordered locus">BVU_0101</name>
</gene>
<sequence length="300" mass="35086">MPDTLIVLIGPTGVGKTELSLSIAEHFRTSIVSADSRQLYADLKIGTAAPTPEQLARVPHYFVGTLQLTDYYSAAQYEADVLAQLEILYQNHDTVILTGGSMMYIDAICKGIDDIPTVDNETRQLMLRRYEQEGLDTLCAELRLLDPEYYKIVDLKNPKRVIHALEICYMTGKTYTSFRTRTHKERPFRIIKIGLTRDREELYDRINRRVDIMMQDGLLEEARQVYPFRHLNSLNTVGYKEMFKYLDGEWTLEFAIGKIKQNSRIYSRKQMTWFKRDKDIVWFHPDQQTEIMQYIHSVNH</sequence>
<proteinExistence type="inferred from homology"/>
<accession>A6KWL7</accession>